<organism>
    <name type="scientific">Staphylococcus aureus (strain MW2)</name>
    <dbReference type="NCBI Taxonomy" id="196620"/>
    <lineage>
        <taxon>Bacteria</taxon>
        <taxon>Bacillati</taxon>
        <taxon>Bacillota</taxon>
        <taxon>Bacilli</taxon>
        <taxon>Bacillales</taxon>
        <taxon>Staphylococcaceae</taxon>
        <taxon>Staphylococcus</taxon>
    </lineage>
</organism>
<keyword id="KW-0963">Cytoplasm</keyword>
<keyword id="KW-0235">DNA replication</keyword>
<keyword id="KW-0238">DNA-binding</keyword>
<keyword id="KW-0239">DNA-directed DNA polymerase</keyword>
<keyword id="KW-0548">Nucleotidyltransferase</keyword>
<keyword id="KW-0808">Transferase</keyword>
<gene>
    <name type="primary">dnaN</name>
    <name type="ordered locus">MW0002</name>
</gene>
<proteinExistence type="inferred from homology"/>
<feature type="chain" id="PRO_0000105467" description="Beta sliding clamp">
    <location>
        <begin position="1"/>
        <end position="377"/>
    </location>
</feature>
<comment type="function">
    <text evidence="1">Confers DNA tethering and processivity to DNA polymerases and other proteins. Acts as a clamp, forming a ring around DNA (a reaction catalyzed by the clamp-loading complex) which diffuses in an ATP-independent manner freely and bidirectionally along dsDNA. Initially characterized for its ability to contact the catalytic subunit of DNA polymerase III (Pol III), a complex, multichain enzyme responsible for most of the replicative synthesis in bacteria; Pol III exhibits 3'-5' exonuclease proofreading activity. The beta chain is required for initiation of replication as well as for processivity of DNA replication.</text>
</comment>
<comment type="subunit">
    <text evidence="1">Forms a ring-shaped head-to-tail homodimer around DNA which binds and tethers DNA polymerases and other proteins to the DNA. The DNA replisome complex has a single clamp-loading complex (3 tau and 1 each of delta, delta', psi and chi subunits) which binds 3 Pol III cores (1 core on the leading strand and 2 on the lagging strand) each with a beta sliding clamp dimer. Additional proteins in the replisome are other copies of gamma, psi and chi, Ssb, DNA helicase and RNA primase.</text>
</comment>
<comment type="subcellular location">
    <subcellularLocation>
        <location evidence="1">Cytoplasm</location>
    </subcellularLocation>
</comment>
<comment type="similarity">
    <text evidence="2">Belongs to the beta sliding clamp family.</text>
</comment>
<protein>
    <recommendedName>
        <fullName>Beta sliding clamp</fullName>
        <shortName>Beta clamp</shortName>
        <shortName>Sliding clamp</shortName>
    </recommendedName>
    <alternativeName>
        <fullName>Beta-clamp processivity factor</fullName>
    </alternativeName>
    <alternativeName>
        <fullName>DNA polymerase III beta sliding clamp subunit</fullName>
    </alternativeName>
    <alternativeName>
        <fullName>DNA polymerase III subunit beta</fullName>
    </alternativeName>
</protein>
<name>DPO3B_STAAW</name>
<accession>P0A023</accession>
<accession>P50029</accession>
<sequence>MMEFTIKRDYFITQLNDTLKAISPRTTLPILTGIKIDAKEHEVILTGSDSEISIEITIPKTVDGEDIVNISETGSVVLPGRFFVDIIKKLPGKDVKLSTNEQFQTLITSGHSEFNLSGLDPDQYPLLPQVSRDDAIQLSVKVLKNVIAQTNFAVSTSETRPVLTGVNWLIQENELICTATDSHRLAVRKLQLEDVSENKNVIIPGKALAELNKIMSDNEEDIDIFFASNQVLFKVGNVNFISRLLEGHYPDTTRLFPENYEIKLSIDNGEFYHAIDRASLLAREGGNNVIKLSTGDDVVELSSTSPEIGTVKEEVDANDVEGGSLKISFNSKYMMDALKAIDNDEVEVEFFGTMKPFILKPKGDDSVTQLILPIRTY</sequence>
<dbReference type="EMBL" id="BA000033">
    <property type="protein sequence ID" value="BAB93867.1"/>
    <property type="molecule type" value="Genomic_DNA"/>
</dbReference>
<dbReference type="RefSeq" id="WP_000969811.1">
    <property type="nucleotide sequence ID" value="NC_003923.1"/>
</dbReference>
<dbReference type="SMR" id="P0A023"/>
<dbReference type="KEGG" id="sam:MW0002"/>
<dbReference type="HOGENOM" id="CLU_038149_2_0_9"/>
<dbReference type="GO" id="GO:0005737">
    <property type="term" value="C:cytoplasm"/>
    <property type="evidence" value="ECO:0007669"/>
    <property type="project" value="UniProtKB-SubCell"/>
</dbReference>
<dbReference type="GO" id="GO:0009360">
    <property type="term" value="C:DNA polymerase III complex"/>
    <property type="evidence" value="ECO:0007669"/>
    <property type="project" value="InterPro"/>
</dbReference>
<dbReference type="GO" id="GO:0008408">
    <property type="term" value="F:3'-5' exonuclease activity"/>
    <property type="evidence" value="ECO:0007669"/>
    <property type="project" value="InterPro"/>
</dbReference>
<dbReference type="GO" id="GO:0003677">
    <property type="term" value="F:DNA binding"/>
    <property type="evidence" value="ECO:0007669"/>
    <property type="project" value="UniProtKB-KW"/>
</dbReference>
<dbReference type="GO" id="GO:0003887">
    <property type="term" value="F:DNA-directed DNA polymerase activity"/>
    <property type="evidence" value="ECO:0007669"/>
    <property type="project" value="UniProtKB-KW"/>
</dbReference>
<dbReference type="GO" id="GO:0006271">
    <property type="term" value="P:DNA strand elongation involved in DNA replication"/>
    <property type="evidence" value="ECO:0007669"/>
    <property type="project" value="TreeGrafter"/>
</dbReference>
<dbReference type="CDD" id="cd00140">
    <property type="entry name" value="beta_clamp"/>
    <property type="match status" value="1"/>
</dbReference>
<dbReference type="FunFam" id="3.10.150.10:FF:000007">
    <property type="entry name" value="Beta sliding clamp"/>
    <property type="match status" value="1"/>
</dbReference>
<dbReference type="Gene3D" id="3.70.10.10">
    <property type="match status" value="1"/>
</dbReference>
<dbReference type="Gene3D" id="3.10.150.10">
    <property type="entry name" value="DNA Polymerase III, subunit A, domain 2"/>
    <property type="match status" value="1"/>
</dbReference>
<dbReference type="InterPro" id="IPR046938">
    <property type="entry name" value="DNA_clamp_sf"/>
</dbReference>
<dbReference type="InterPro" id="IPR001001">
    <property type="entry name" value="DNA_polIII_beta"/>
</dbReference>
<dbReference type="InterPro" id="IPR022635">
    <property type="entry name" value="DNA_polIII_beta_C"/>
</dbReference>
<dbReference type="InterPro" id="IPR022637">
    <property type="entry name" value="DNA_polIII_beta_cen"/>
</dbReference>
<dbReference type="InterPro" id="IPR022634">
    <property type="entry name" value="DNA_polIII_beta_N"/>
</dbReference>
<dbReference type="NCBIfam" id="TIGR00663">
    <property type="entry name" value="dnan"/>
    <property type="match status" value="1"/>
</dbReference>
<dbReference type="PANTHER" id="PTHR30478:SF0">
    <property type="entry name" value="BETA SLIDING CLAMP"/>
    <property type="match status" value="1"/>
</dbReference>
<dbReference type="PANTHER" id="PTHR30478">
    <property type="entry name" value="DNA POLYMERASE III SUBUNIT BETA"/>
    <property type="match status" value="1"/>
</dbReference>
<dbReference type="Pfam" id="PF00712">
    <property type="entry name" value="DNA_pol3_beta"/>
    <property type="match status" value="1"/>
</dbReference>
<dbReference type="Pfam" id="PF02767">
    <property type="entry name" value="DNA_pol3_beta_2"/>
    <property type="match status" value="1"/>
</dbReference>
<dbReference type="Pfam" id="PF02768">
    <property type="entry name" value="DNA_pol3_beta_3"/>
    <property type="match status" value="1"/>
</dbReference>
<dbReference type="PIRSF" id="PIRSF000804">
    <property type="entry name" value="DNA_pol_III_b"/>
    <property type="match status" value="1"/>
</dbReference>
<dbReference type="SMART" id="SM00480">
    <property type="entry name" value="POL3Bc"/>
    <property type="match status" value="1"/>
</dbReference>
<dbReference type="SUPFAM" id="SSF55979">
    <property type="entry name" value="DNA clamp"/>
    <property type="match status" value="3"/>
</dbReference>
<evidence type="ECO:0000250" key="1">
    <source>
        <dbReference type="UniProtKB" id="P0A988"/>
    </source>
</evidence>
<evidence type="ECO:0000305" key="2"/>
<reference key="1">
    <citation type="journal article" date="2002" name="Lancet">
        <title>Genome and virulence determinants of high virulence community-acquired MRSA.</title>
        <authorList>
            <person name="Baba T."/>
            <person name="Takeuchi F."/>
            <person name="Kuroda M."/>
            <person name="Yuzawa H."/>
            <person name="Aoki K."/>
            <person name="Oguchi A."/>
            <person name="Nagai Y."/>
            <person name="Iwama N."/>
            <person name="Asano K."/>
            <person name="Naimi T."/>
            <person name="Kuroda H."/>
            <person name="Cui L."/>
            <person name="Yamamoto K."/>
            <person name="Hiramatsu K."/>
        </authorList>
    </citation>
    <scope>NUCLEOTIDE SEQUENCE [LARGE SCALE GENOMIC DNA]</scope>
    <source>
        <strain>MW2</strain>
    </source>
</reference>